<proteinExistence type="evidence at protein level"/>
<comment type="function">
    <text evidence="1 4 5 6 8 9 10 12 13 14 18">Transcriptional regulator (PubMed:15958557, PubMed:8336701, PubMed:8703054). Recognizes and binds to the DNA sequence 5'-GCG(T/G)GGGCG-3'(EGR-site) in the promoter region of target genes (PubMed:15958557, PubMed:2028256, PubMed:8703054, PubMed:8939742). Binds double-stranded target DNA, irrespective of the cytosine methylation status (By similarity). Regulates the transcription of numerous target genes, and thereby plays an important role in regulating the response to growth factors, DNA damage, and ischemia (PubMed:11100120, PubMed:15958557). Plays a role in the regulation of cell survival, proliferation and cell death (PubMed:15265859, PubMed:15958557). Activates expression of p53/TP53 and TGFB1, and thereby helps prevent tumor formation (PubMed:15958557). Required for normal progress through mitosis and normal proliferation of hepatocytes after partial hepatectomy (PubMed:15265859). Mediates responses to ischemia and hypoxia; regulates the expression of proteins such as IL1B and CXCL2 that are involved in inflammatory processes and development of tissue damage after ischemia (PubMed:11100120). Regulates biosynthesis of luteinizing hormone (LHB) in the pituitary (PubMed:8703054). Regulates the amplitude of the expression rhythms of clock genes: BMAL1, PER2 and NR1D1 in the liver via the activation of PER1 (clock repressor) transcription (PubMed:26471974). Regulates the rhythmic expression of core-clock gene BMAL1 in the suprachiasmatic nucleus (SCN) (PubMed:29138967).</text>
</comment>
<comment type="subunit">
    <text evidence="1">Interacts with SNAI1 and SP1 upon 12-O-tetradecanoylphorbol-13-acetate (TPA) induction.</text>
</comment>
<comment type="subcellular location">
    <subcellularLocation>
        <location evidence="4 6 12">Nucleus</location>
    </subcellularLocation>
    <subcellularLocation>
        <location evidence="1">Cytoplasm</location>
    </subcellularLocation>
</comment>
<comment type="tissue specificity">
    <text evidence="4 5 9">Detected in lung vasculature and in mononuclear phagocytes (PubMed:11100120). Detected in liver (at protein level) (PubMed:15265859). Expressed in the liver in a circadian manner (PubMed:26471974).</text>
</comment>
<comment type="induction">
    <text evidence="4 5 11">By growth factors (PubMed:3133658). Up-regulated in lung vasculature in response to reperfusion after ischemia (PubMed:11100120). Up-regulated in liver in response to partial hepatectomy (PubMed:15265859).</text>
</comment>
<comment type="domain">
    <text evidence="1 7 8 14">Binds to DNA motifs with the sequence 5'-GCG(T/G)GGGCG-3' via its C2H2-type zinc fingers (PubMed:1740423, PubMed:2028256, PubMed:8336701, PubMed:8939742). The first, most N-terminal zinc finger binds to the 3'-GCG motif, the middle zinc finger interacts with the central TGG motif, and the C-terminal zinc finger binds to the 5'-GCG motif (PubMed:2028256, PubMed:8939742). Binds double-stranded target DNA, irrespective of the cytosine methylation status. Has reduced affinity for target DNA where the cytosines have been oxidized to 5-hydroxymethylcytosine. Does not bind target DNA where the cytosines have been oxidized to 5-formylcytosine or 5-carboxylcytosine (By similarity).</text>
</comment>
<comment type="disruption phenotype">
    <text evidence="4 5 6 10 13">Mice appear grossly normal, but females are anestrous and infertile with an uterus weight that is roughly 30% of that of wild-type. Ovaries contain normal numbers of follicles, but lack corpora lutea. Serum progesterone levels are strongly reduced; estradiol levels are normal. The level of luteinizing hormone (LHB) in the pituitary is strongly reduced in males and not detectable in females (PubMed:8703054). Responses to ischemia and hypoxia are blunted, leading to reduced tissue damage in response to ischemia and increased survival (PubMed:11100120). Liver regeneration is impaired after partial hepatectomy, due to impaired mitotic progress and reduced proliferation of hepatocytes (PubMed:15265859). Untreated mutant mice do not display an increased tendency to develop tumors, but develop tumors earlier than wild-type when treated first with a tumor initiator, and then with a tumor promoter (PubMed:15958557). Mice lack daily rhythmicity in the expression of the core-clock gene BMAL1 and display a reduced and altered locomotor activity and altered temperature regulation (PubMed:29138967).</text>
</comment>
<comment type="similarity">
    <text evidence="18">Belongs to the EGR C2H2-type zinc-finger protein family.</text>
</comment>
<reference key="1">
    <citation type="journal article" date="1988" name="Cell">
        <title>A zinc finger-encoding gene coregulated with c-fos during growth and differentiation, and after cellular depolarization.</title>
        <authorList>
            <person name="Sukhatme V.P."/>
            <person name="Cao X."/>
            <person name="Chang L.C."/>
            <person name="Tsai-Morris C.-H."/>
            <person name="Stamenkovich D."/>
            <person name="Ferreira P.C.P."/>
            <person name="Cohen D.R."/>
            <person name="Edwards S.A."/>
            <person name="Shows T.B."/>
            <person name="Curran T."/>
            <person name="le Beau M.M."/>
            <person name="Adamson E.D."/>
        </authorList>
    </citation>
    <scope>NUCLEOTIDE SEQUENCE [MRNA]</scope>
</reference>
<reference key="2">
    <citation type="journal article" date="1988" name="Proc. Natl. Acad. Sci. U.S.A.">
        <title>A gene activated in mouse 3T3 cells by serum growth factors encodes a protein with 'zinc finger' sequences.</title>
        <authorList>
            <person name="Christy B.A."/>
            <person name="Lau L.F."/>
            <person name="Nathans D."/>
        </authorList>
    </citation>
    <scope>NUCLEOTIDE SEQUENCE [MRNA]</scope>
</reference>
<reference key="3">
    <citation type="journal article" date="1989" name="Gene">
        <title>Structure, chromosome mapping and regulation of the mouse zinc-finger gene Krox-24; evidence for a common regulatory pathway for immediate-early serum-response genes.</title>
        <authorList>
            <person name="Janssen-Timmen U."/>
            <person name="Lemaire P."/>
            <person name="Mattei M.-G."/>
            <person name="Revelant O."/>
            <person name="Charnay P."/>
        </authorList>
    </citation>
    <scope>NUCLEOTIDE SEQUENCE [GENOMIC DNA]</scope>
</reference>
<reference key="4">
    <citation type="journal article" date="1988" name="Proc. Natl. Acad. Sci. U.S.A.">
        <title>Two mouse genes encoding potential transcription factors with identical DNA-binding domains are activated by growth factors in cultured cells.</title>
        <authorList>
            <person name="Lemaire P."/>
            <person name="Revelant O."/>
            <person name="Bravo R."/>
            <person name="Charnay P."/>
        </authorList>
    </citation>
    <scope>NUCLEOTIDE SEQUENCE [MRNA] OF 50-533</scope>
    <scope>INDUCTION BY GROWTH FACTORS</scope>
</reference>
<reference key="5">
    <citation type="journal article" date="1992" name="J. Biol. Chem.">
        <title>In vivo mutational analysis of the NGFI-A zinc fingers.</title>
        <authorList>
            <person name="Wilson T.E."/>
            <person name="Day M.L."/>
            <person name="Pexton T."/>
            <person name="Padgett K.A."/>
            <person name="Johnston M."/>
            <person name="Milbrandt J."/>
        </authorList>
    </citation>
    <scope>MUTAGENESIS OF ZINC-FINGERS</scope>
    <scope>DOMAIN</scope>
</reference>
<reference key="6">
    <citation type="journal article" date="1993" name="Mol. Cell. Biol.">
        <title>A novel repression module, an extensive activation domain, and a bipartite nuclear localization signal defined in the immediate-early transcription factor Egr-1.</title>
        <authorList>
            <person name="Gashler A.L."/>
            <person name="Swaminathan S."/>
            <person name="Sukhatme V.P."/>
        </authorList>
    </citation>
    <scope>FUNCTION</scope>
    <scope>SUBCELLULAR LOCATION</scope>
    <scope>DOMAIN</scope>
</reference>
<reference key="7">
    <citation type="journal article" date="1996" name="Science">
        <title>Luteinizing hormone deficiency and female infertility in mice lacking the transcription factor NGFI-A (Egr-1).</title>
        <authorList>
            <person name="Lee S.L."/>
            <person name="Sadovsky Y."/>
            <person name="Swirnoff A.H."/>
            <person name="Polish J.A."/>
            <person name="Goda P."/>
            <person name="Gavrilina G."/>
            <person name="Milbrandt J."/>
        </authorList>
    </citation>
    <scope>DISRUPTION PHENOTYPE</scope>
    <scope>FUNCTION</scope>
</reference>
<reference key="8">
    <citation type="journal article" date="2000" name="Nat. Med.">
        <title>Egr-1, a master switch coordinating upregulation of divergent gene families underlying ischemic stress.</title>
        <authorList>
            <person name="Yan S.F."/>
            <person name="Fujita T."/>
            <person name="Lu J."/>
            <person name="Okada K."/>
            <person name="Shan Zou Y."/>
            <person name="Mackman N."/>
            <person name="Pinsky D.J."/>
            <person name="Stern D.M."/>
        </authorList>
    </citation>
    <scope>DISRUPTION PHENOTYPE</scope>
    <scope>FUNCTION</scope>
    <scope>TISSUE SPECIFICITY</scope>
    <scope>SUBCELLULAR LOCATION</scope>
    <scope>INDUCTION BY ISCHEMIA</scope>
</reference>
<reference key="9">
    <citation type="journal article" date="2004" name="J. Biol. Chem.">
        <title>Delayed hepatocellular mitotic progression and impaired liver regeneration in early growth response-1-deficient mice.</title>
        <authorList>
            <person name="Liao Y."/>
            <person name="Shikapwashya O.N."/>
            <person name="Shteyer E."/>
            <person name="Dieckgraefe B.K."/>
            <person name="Hruz P.W."/>
            <person name="Rudnick D.A."/>
        </authorList>
    </citation>
    <scope>DISRUPTION PHENOTYPE</scope>
    <scope>FUNCTION</scope>
    <scope>TISSUE SPECIFICITY</scope>
    <scope>INDUCTION BY PARTIAL HEPATECTOMY</scope>
</reference>
<reference key="10">
    <citation type="journal article" date="2005" name="Cancer Res.">
        <title>Early growth response 1 acts as a tumor suppressor in vivo and in vitro via regulation of p53.</title>
        <authorList>
            <person name="Krones-Herzig A."/>
            <person name="Mittal S."/>
            <person name="Yule K."/>
            <person name="Liang H."/>
            <person name="English C."/>
            <person name="Urcis R."/>
            <person name="Soni T."/>
            <person name="Adamson E.D."/>
            <person name="Mercola D."/>
        </authorList>
    </citation>
    <scope>DISRUPTION PHENOTYPE</scope>
    <scope>FUNCTION</scope>
    <scope>SUBCELLULAR LOCATION</scope>
</reference>
<reference key="11">
    <citation type="journal article" date="2015" name="Sci. Rep.">
        <title>EGR1 regulates hepatic clock gene amplitude by activating Per1 transcription.</title>
        <authorList>
            <person name="Tao W."/>
            <person name="Wu J."/>
            <person name="Zhang Q."/>
            <person name="Lai S.S."/>
            <person name="Jiang S."/>
            <person name="Jiang C."/>
            <person name="Xu Y."/>
            <person name="Xue B."/>
            <person name="Du J."/>
            <person name="Li C.J."/>
        </authorList>
    </citation>
    <scope>FUNCTION</scope>
    <scope>TISSUE SPECIFICITY</scope>
</reference>
<reference key="12">
    <citation type="journal article" date="2018" name="J. Mol. Neurosci.">
        <title>Mice lacking EGR1 have impaired clock gene (BMAL1) oscillation, locomotor activity, and body temperature.</title>
        <authorList>
            <person name="Riedel C.S."/>
            <person name="Georg B."/>
            <person name="Joergensen H.L."/>
            <person name="Hannibal J."/>
            <person name="Fahrenkrug J."/>
        </authorList>
    </citation>
    <scope>FUNCTION</scope>
    <scope>DISRUPTION PHENOTYPE</scope>
</reference>
<reference evidence="20" key="13">
    <citation type="journal article" date="1991" name="Science">
        <title>Zinc finger-DNA recognition: crystal structure of a Zif268-DNA complex at 2.1 A.</title>
        <authorList>
            <person name="Pavletich N.P."/>
            <person name="Pabo C.O."/>
        </authorList>
    </citation>
    <scope>X-RAY CRYSTALLOGRAPHY (2.10 ANGSTROMS) OF 332-418 IN COMPLEX WITH ZINC AND TARGET DNA</scope>
    <scope>DOMAIN</scope>
    <scope>FUNCTION</scope>
</reference>
<reference evidence="19" key="14">
    <citation type="journal article" date="1996" name="Structure">
        <title>Zif268 protein-DNA complex refined at 1.6 A: a model system for understanding zinc finger-DNA interactions.</title>
        <authorList>
            <person name="Elrod-Erickson M."/>
            <person name="Rould M.A."/>
            <person name="Nekludova L."/>
            <person name="Pabo C.O."/>
        </authorList>
    </citation>
    <scope>X-RAY CRYSTALLOGRAPHY (1.60 ANGSTROMS) OF 333-421 IN COMPLEX WITH ZINC AND TARGET DNA</scope>
    <scope>DOMAIN</scope>
    <scope>FUNCTION</scope>
</reference>
<protein>
    <recommendedName>
        <fullName>Early growth response protein 1</fullName>
        <shortName>EGR-1</shortName>
    </recommendedName>
    <alternativeName>
        <fullName evidence="15">Nerve growth factor-induced protein A</fullName>
        <shortName evidence="15">NGFI-A</shortName>
    </alternativeName>
    <alternativeName>
        <fullName evidence="16">Transcription factor Zif268</fullName>
    </alternativeName>
    <alternativeName>
        <fullName evidence="17">Zinc finger protein Krox-24</fullName>
    </alternativeName>
</protein>
<feature type="chain" id="PRO_0000047110" description="Early growth response protein 1">
    <location>
        <begin position="1"/>
        <end position="533"/>
    </location>
</feature>
<feature type="zinc finger region" description="C2H2-type 1" evidence="2">
    <location>
        <begin position="336"/>
        <end position="360"/>
    </location>
</feature>
<feature type="zinc finger region" description="C2H2-type 2" evidence="2">
    <location>
        <begin position="366"/>
        <end position="388"/>
    </location>
</feature>
<feature type="zinc finger region" description="C2H2-type 3" evidence="2">
    <location>
        <begin position="394"/>
        <end position="416"/>
    </location>
</feature>
<feature type="region of interest" description="Disordered" evidence="3">
    <location>
        <begin position="1"/>
        <end position="94"/>
    </location>
</feature>
<feature type="region of interest" description="Disordered" evidence="3">
    <location>
        <begin position="161"/>
        <end position="237"/>
    </location>
</feature>
<feature type="region of interest" description="Disordered" evidence="3">
    <location>
        <begin position="316"/>
        <end position="336"/>
    </location>
</feature>
<feature type="region of interest" description="Disordered" evidence="3">
    <location>
        <begin position="407"/>
        <end position="478"/>
    </location>
</feature>
<feature type="compositionally biased region" description="Gly residues" evidence="3">
    <location>
        <begin position="68"/>
        <end position="77"/>
    </location>
</feature>
<feature type="compositionally biased region" description="Low complexity" evidence="3">
    <location>
        <begin position="164"/>
        <end position="189"/>
    </location>
</feature>
<feature type="compositionally biased region" description="Basic residues" evidence="3">
    <location>
        <begin position="411"/>
        <end position="421"/>
    </location>
</feature>
<feature type="compositionally biased region" description="Low complexity" evidence="3">
    <location>
        <begin position="427"/>
        <end position="475"/>
    </location>
</feature>
<feature type="site" description="Interaction with DNA" evidence="8 14 19 20">
    <location>
        <position position="334"/>
    </location>
</feature>
<feature type="site" description="Interaction with DNA" evidence="8 14 19 20">
    <location>
        <position position="345"/>
    </location>
</feature>
<feature type="site" description="Interaction with DNA" evidence="8 14 19 20">
    <location>
        <position position="349"/>
    </location>
</feature>
<feature type="site" description="Interaction with DNA" evidence="8 14 19 20">
    <location>
        <position position="355"/>
    </location>
</feature>
<feature type="site" description="Interaction with DNA" evidence="8 14 19 20">
    <location>
        <position position="373"/>
    </location>
</feature>
<feature type="site" description="Interaction with DNA" evidence="8 14 19 20">
    <location>
        <position position="377"/>
    </location>
</feature>
<feature type="site" description="Interaction with DNA" evidence="8 14 19 20">
    <location>
        <position position="401"/>
    </location>
</feature>
<feature type="site" description="Interaction with DNA" evidence="8 14 19 20">
    <location>
        <position position="405"/>
    </location>
</feature>
<feature type="site" description="Interaction with DNA" evidence="8 14 19 20">
    <location>
        <position position="411"/>
    </location>
</feature>
<feature type="cross-link" description="Glycyl lysine isopeptide (Lys-Gly) (interchain with G-Cter in SUMO2)" evidence="1">
    <location>
        <position position="303"/>
    </location>
</feature>
<feature type="sequence conflict" description="In Ref. 3; AAB00468 and 4; AAA39382." evidence="18" ref="3 4">
    <original>S</original>
    <variation>T</variation>
    <location>
        <position position="76"/>
    </location>
</feature>
<feature type="sequence conflict" description="In Ref. 3; AAB00468 and 4; AAA39382." evidence="18" ref="3 4">
    <original>S</original>
    <variation>T</variation>
    <location>
        <position position="80"/>
    </location>
</feature>
<feature type="strand" evidence="23">
    <location>
        <begin position="335"/>
        <end position="337"/>
    </location>
</feature>
<feature type="strand" evidence="21">
    <location>
        <begin position="340"/>
        <end position="342"/>
    </location>
</feature>
<feature type="strand" evidence="21">
    <location>
        <begin position="346"/>
        <end position="349"/>
    </location>
</feature>
<feature type="helix" evidence="21">
    <location>
        <begin position="350"/>
        <end position="361"/>
    </location>
</feature>
<feature type="turn" evidence="22">
    <location>
        <begin position="369"/>
        <end position="371"/>
    </location>
</feature>
<feature type="strand" evidence="22">
    <location>
        <begin position="374"/>
        <end position="376"/>
    </location>
</feature>
<feature type="helix" evidence="22">
    <location>
        <begin position="378"/>
        <end position="389"/>
    </location>
</feature>
<feature type="turn" evidence="22">
    <location>
        <begin position="397"/>
        <end position="399"/>
    </location>
</feature>
<feature type="strand" evidence="22">
    <location>
        <begin position="402"/>
        <end position="405"/>
    </location>
</feature>
<feature type="helix" evidence="22">
    <location>
        <begin position="406"/>
        <end position="412"/>
    </location>
</feature>
<feature type="helix" evidence="21">
    <location>
        <begin position="414"/>
        <end position="417"/>
    </location>
</feature>
<dbReference type="EMBL" id="M20157">
    <property type="protein sequence ID" value="AAA37544.1"/>
    <property type="molecule type" value="mRNA"/>
</dbReference>
<dbReference type="EMBL" id="M22326">
    <property type="protein sequence ID" value="AAA40416.1"/>
    <property type="molecule type" value="mRNA"/>
</dbReference>
<dbReference type="EMBL" id="M28845">
    <property type="protein sequence ID" value="AAB00468.1"/>
    <property type="molecule type" value="Genomic_DNA"/>
</dbReference>
<dbReference type="EMBL" id="M28844">
    <property type="protein sequence ID" value="AAB00468.1"/>
    <property type="status" value="JOINED"/>
    <property type="molecule type" value="Genomic_DNA"/>
</dbReference>
<dbReference type="EMBL" id="M19643">
    <property type="protein sequence ID" value="AAA39382.1"/>
    <property type="molecule type" value="mRNA"/>
</dbReference>
<dbReference type="CCDS" id="CCDS29136.1"/>
<dbReference type="PIR" id="JS0304">
    <property type="entry name" value="JS0304"/>
</dbReference>
<dbReference type="RefSeq" id="NP_031939.1">
    <property type="nucleotide sequence ID" value="NM_007913.5"/>
</dbReference>
<dbReference type="PDB" id="1A1F">
    <property type="method" value="X-ray"/>
    <property type="resolution" value="2.10 A"/>
    <property type="chains" value="A=333-421"/>
</dbReference>
<dbReference type="PDB" id="1A1G">
    <property type="method" value="X-ray"/>
    <property type="resolution" value="1.90 A"/>
    <property type="chains" value="A=333-421"/>
</dbReference>
<dbReference type="PDB" id="1A1H">
    <property type="method" value="X-ray"/>
    <property type="resolution" value="1.60 A"/>
    <property type="chains" value="A=333-421"/>
</dbReference>
<dbReference type="PDB" id="1A1I">
    <property type="method" value="X-ray"/>
    <property type="resolution" value="1.60 A"/>
    <property type="chains" value="A=333-421"/>
</dbReference>
<dbReference type="PDB" id="1A1J">
    <property type="method" value="X-ray"/>
    <property type="resolution" value="2.00 A"/>
    <property type="chains" value="A=333-421"/>
</dbReference>
<dbReference type="PDB" id="1A1K">
    <property type="method" value="X-ray"/>
    <property type="resolution" value="1.90 A"/>
    <property type="chains" value="A=333-421"/>
</dbReference>
<dbReference type="PDB" id="1A1L">
    <property type="method" value="X-ray"/>
    <property type="resolution" value="2.30 A"/>
    <property type="chains" value="A=333-421"/>
</dbReference>
<dbReference type="PDB" id="1AAY">
    <property type="method" value="X-ray"/>
    <property type="resolution" value="1.60 A"/>
    <property type="chains" value="A=333-421"/>
</dbReference>
<dbReference type="PDB" id="1F2I">
    <property type="method" value="X-ray"/>
    <property type="resolution" value="2.35 A"/>
    <property type="chains" value="G/H/I/J/K/L=334-389"/>
</dbReference>
<dbReference type="PDB" id="1G2D">
    <property type="method" value="X-ray"/>
    <property type="resolution" value="2.20 A"/>
    <property type="chains" value="C/F=333-421"/>
</dbReference>
<dbReference type="PDB" id="1G2F">
    <property type="method" value="X-ray"/>
    <property type="resolution" value="2.00 A"/>
    <property type="chains" value="C/F=333-421"/>
</dbReference>
<dbReference type="PDB" id="1JK1">
    <property type="method" value="X-ray"/>
    <property type="resolution" value="1.90 A"/>
    <property type="chains" value="A=333-421"/>
</dbReference>
<dbReference type="PDB" id="1JK2">
    <property type="method" value="X-ray"/>
    <property type="resolution" value="1.65 A"/>
    <property type="chains" value="A=333-421"/>
</dbReference>
<dbReference type="PDB" id="1LLM">
    <property type="method" value="X-ray"/>
    <property type="resolution" value="1.50 A"/>
    <property type="chains" value="C/D=364-412"/>
</dbReference>
<dbReference type="PDB" id="1P47">
    <property type="method" value="X-ray"/>
    <property type="resolution" value="2.20 A"/>
    <property type="chains" value="A/B=333-419"/>
</dbReference>
<dbReference type="PDB" id="1ZAA">
    <property type="method" value="X-ray"/>
    <property type="resolution" value="2.10 A"/>
    <property type="chains" value="C=332-418"/>
</dbReference>
<dbReference type="PDBsum" id="1A1F"/>
<dbReference type="PDBsum" id="1A1G"/>
<dbReference type="PDBsum" id="1A1H"/>
<dbReference type="PDBsum" id="1A1I"/>
<dbReference type="PDBsum" id="1A1J"/>
<dbReference type="PDBsum" id="1A1K"/>
<dbReference type="PDBsum" id="1A1L"/>
<dbReference type="PDBsum" id="1AAY"/>
<dbReference type="PDBsum" id="1F2I"/>
<dbReference type="PDBsum" id="1G2D"/>
<dbReference type="PDBsum" id="1G2F"/>
<dbReference type="PDBsum" id="1JK1"/>
<dbReference type="PDBsum" id="1JK2"/>
<dbReference type="PDBsum" id="1LLM"/>
<dbReference type="PDBsum" id="1P47"/>
<dbReference type="PDBsum" id="1ZAA"/>
<dbReference type="BMRB" id="P08046"/>
<dbReference type="SMR" id="P08046"/>
<dbReference type="BioGRID" id="199404">
    <property type="interactions" value="9"/>
</dbReference>
<dbReference type="FunCoup" id="P08046">
    <property type="interactions" value="2128"/>
</dbReference>
<dbReference type="IntAct" id="P08046">
    <property type="interactions" value="1"/>
</dbReference>
<dbReference type="STRING" id="10090.ENSMUSP00000069616"/>
<dbReference type="GlyGen" id="P08046">
    <property type="glycosylation" value="2 sites, 1 O-linked glycan (2 sites)"/>
</dbReference>
<dbReference type="iPTMnet" id="P08046"/>
<dbReference type="PhosphoSitePlus" id="P08046"/>
<dbReference type="PaxDb" id="10090-ENSMUSP00000069616"/>
<dbReference type="ProteomicsDB" id="275907"/>
<dbReference type="Pumba" id="P08046"/>
<dbReference type="Antibodypedia" id="14988">
    <property type="antibodies" value="546 antibodies from 42 providers"/>
</dbReference>
<dbReference type="DNASU" id="13653"/>
<dbReference type="Ensembl" id="ENSMUST00000064795.6">
    <property type="protein sequence ID" value="ENSMUSP00000069616.6"/>
    <property type="gene ID" value="ENSMUSG00000038418.9"/>
</dbReference>
<dbReference type="GeneID" id="13653"/>
<dbReference type="KEGG" id="mmu:13653"/>
<dbReference type="UCSC" id="uc008elt.1">
    <property type="organism name" value="mouse"/>
</dbReference>
<dbReference type="AGR" id="MGI:95295"/>
<dbReference type="CTD" id="1958"/>
<dbReference type="MGI" id="MGI:95295">
    <property type="gene designation" value="Egr1"/>
</dbReference>
<dbReference type="VEuPathDB" id="HostDB:ENSMUSG00000038418"/>
<dbReference type="eggNOG" id="KOG1721">
    <property type="taxonomic scope" value="Eukaryota"/>
</dbReference>
<dbReference type="GeneTree" id="ENSGT00940000160184"/>
<dbReference type="HOGENOM" id="CLU_043235_2_0_1"/>
<dbReference type="InParanoid" id="P08046"/>
<dbReference type="OMA" id="NFQVPMI"/>
<dbReference type="OrthoDB" id="10018191at2759"/>
<dbReference type="PhylomeDB" id="P08046"/>
<dbReference type="TreeFam" id="TF318980"/>
<dbReference type="BioGRID-ORCS" id="13653">
    <property type="hits" value="4 hits in 83 CRISPR screens"/>
</dbReference>
<dbReference type="ChiTaRS" id="Egr1">
    <property type="organism name" value="mouse"/>
</dbReference>
<dbReference type="EvolutionaryTrace" id="P08046"/>
<dbReference type="PRO" id="PR:P08046"/>
<dbReference type="Proteomes" id="UP000000589">
    <property type="component" value="Chromosome 18"/>
</dbReference>
<dbReference type="RNAct" id="P08046">
    <property type="molecule type" value="protein"/>
</dbReference>
<dbReference type="Bgee" id="ENSMUSG00000038418">
    <property type="expression patterns" value="Expressed in associated mesenchyme of midgut and 293 other cell types or tissues"/>
</dbReference>
<dbReference type="ExpressionAtlas" id="P08046">
    <property type="expression patterns" value="baseline and differential"/>
</dbReference>
<dbReference type="GO" id="GO:0000785">
    <property type="term" value="C:chromatin"/>
    <property type="evidence" value="ECO:0007669"/>
    <property type="project" value="Ensembl"/>
</dbReference>
<dbReference type="GO" id="GO:0005737">
    <property type="term" value="C:cytoplasm"/>
    <property type="evidence" value="ECO:0000250"/>
    <property type="project" value="UniProtKB"/>
</dbReference>
<dbReference type="GO" id="GO:0005654">
    <property type="term" value="C:nucleoplasm"/>
    <property type="evidence" value="ECO:0000304"/>
    <property type="project" value="Reactome"/>
</dbReference>
<dbReference type="GO" id="GO:0005634">
    <property type="term" value="C:nucleus"/>
    <property type="evidence" value="ECO:0000314"/>
    <property type="project" value="UniProtKB"/>
</dbReference>
<dbReference type="GO" id="GO:0003677">
    <property type="term" value="F:DNA binding"/>
    <property type="evidence" value="ECO:0000314"/>
    <property type="project" value="MGI"/>
</dbReference>
<dbReference type="GO" id="GO:0001228">
    <property type="term" value="F:DNA-binding transcription activator activity, RNA polymerase II-specific"/>
    <property type="evidence" value="ECO:0000314"/>
    <property type="project" value="BHF-UCL"/>
</dbReference>
<dbReference type="GO" id="GO:0003700">
    <property type="term" value="F:DNA-binding transcription factor activity"/>
    <property type="evidence" value="ECO:0000314"/>
    <property type="project" value="UniProtKB"/>
</dbReference>
<dbReference type="GO" id="GO:0010385">
    <property type="term" value="F:double-stranded methylated DNA binding"/>
    <property type="evidence" value="ECO:0000250"/>
    <property type="project" value="UniProtKB"/>
</dbReference>
<dbReference type="GO" id="GO:0019899">
    <property type="term" value="F:enzyme binding"/>
    <property type="evidence" value="ECO:0000353"/>
    <property type="project" value="ARUK-UCL"/>
</dbReference>
<dbReference type="GO" id="GO:0044729">
    <property type="term" value="F:hemi-methylated DNA-binding"/>
    <property type="evidence" value="ECO:0000250"/>
    <property type="project" value="UniProtKB"/>
</dbReference>
<dbReference type="GO" id="GO:0035035">
    <property type="term" value="F:histone acetyltransferase binding"/>
    <property type="evidence" value="ECO:0007669"/>
    <property type="project" value="Ensembl"/>
</dbReference>
<dbReference type="GO" id="GO:1990841">
    <property type="term" value="F:promoter-specific chromatin binding"/>
    <property type="evidence" value="ECO:0000250"/>
    <property type="project" value="UniProtKB"/>
</dbReference>
<dbReference type="GO" id="GO:0000978">
    <property type="term" value="F:RNA polymerase II cis-regulatory region sequence-specific DNA binding"/>
    <property type="evidence" value="ECO:0000314"/>
    <property type="project" value="BHF-UCL"/>
</dbReference>
<dbReference type="GO" id="GO:0000977">
    <property type="term" value="F:RNA polymerase II transcription regulatory region sequence-specific DNA binding"/>
    <property type="evidence" value="ECO:0000314"/>
    <property type="project" value="UniProtKB"/>
</dbReference>
<dbReference type="GO" id="GO:0043565">
    <property type="term" value="F:sequence-specific DNA binding"/>
    <property type="evidence" value="ECO:0000250"/>
    <property type="project" value="UniProtKB"/>
</dbReference>
<dbReference type="GO" id="GO:0000976">
    <property type="term" value="F:transcription cis-regulatory region binding"/>
    <property type="evidence" value="ECO:0000314"/>
    <property type="project" value="BHF-UCL"/>
</dbReference>
<dbReference type="GO" id="GO:0008270">
    <property type="term" value="F:zinc ion binding"/>
    <property type="evidence" value="ECO:0000250"/>
    <property type="project" value="UniProtKB"/>
</dbReference>
<dbReference type="GO" id="GO:0030509">
    <property type="term" value="P:BMP signaling pathway"/>
    <property type="evidence" value="ECO:0000314"/>
    <property type="project" value="MGI"/>
</dbReference>
<dbReference type="GO" id="GO:0071480">
    <property type="term" value="P:cellular response to gamma radiation"/>
    <property type="evidence" value="ECO:0000315"/>
    <property type="project" value="BHF-UCL"/>
</dbReference>
<dbReference type="GO" id="GO:0071504">
    <property type="term" value="P:cellular response to heparin"/>
    <property type="evidence" value="ECO:0000250"/>
    <property type="project" value="UniProtKB"/>
</dbReference>
<dbReference type="GO" id="GO:0098759">
    <property type="term" value="P:cellular response to interleukin-8"/>
    <property type="evidence" value="ECO:0000250"/>
    <property type="project" value="UniProtKB"/>
</dbReference>
<dbReference type="GO" id="GO:0071506">
    <property type="term" value="P:cellular response to mycophenolic acid"/>
    <property type="evidence" value="ECO:0000250"/>
    <property type="project" value="UniProtKB"/>
</dbReference>
<dbReference type="GO" id="GO:0032922">
    <property type="term" value="P:circadian regulation of gene expression"/>
    <property type="evidence" value="ECO:0000315"/>
    <property type="project" value="UniProtKB"/>
</dbReference>
<dbReference type="GO" id="GO:0060086">
    <property type="term" value="P:circadian temperature homeostasis"/>
    <property type="evidence" value="ECO:0000315"/>
    <property type="project" value="UniProtKB"/>
</dbReference>
<dbReference type="GO" id="GO:0044849">
    <property type="term" value="P:estrous cycle"/>
    <property type="evidence" value="ECO:0000315"/>
    <property type="project" value="UniProtKB"/>
</dbReference>
<dbReference type="GO" id="GO:0072110">
    <property type="term" value="P:glomerular mesangial cell proliferation"/>
    <property type="evidence" value="ECO:0000250"/>
    <property type="project" value="UniProtKB"/>
</dbReference>
<dbReference type="GO" id="GO:0070498">
    <property type="term" value="P:interleukin-1-mediated signaling pathway"/>
    <property type="evidence" value="ECO:0007669"/>
    <property type="project" value="Ensembl"/>
</dbReference>
<dbReference type="GO" id="GO:0045475">
    <property type="term" value="P:locomotor rhythm"/>
    <property type="evidence" value="ECO:0000315"/>
    <property type="project" value="UniProtKB"/>
</dbReference>
<dbReference type="GO" id="GO:0090090">
    <property type="term" value="P:negative regulation of canonical Wnt signaling pathway"/>
    <property type="evidence" value="ECO:0000315"/>
    <property type="project" value="BHF-UCL"/>
</dbReference>
<dbReference type="GO" id="GO:0000122">
    <property type="term" value="P:negative regulation of transcription by RNA polymerase II"/>
    <property type="evidence" value="ECO:0000314"/>
    <property type="project" value="MGI"/>
</dbReference>
<dbReference type="GO" id="GO:0032722">
    <property type="term" value="P:positive regulation of chemokine production"/>
    <property type="evidence" value="ECO:0000315"/>
    <property type="project" value="UniProtKB"/>
</dbReference>
<dbReference type="GO" id="GO:0045893">
    <property type="term" value="P:positive regulation of DNA-templated transcription"/>
    <property type="evidence" value="ECO:0000314"/>
    <property type="project" value="UniProtKB"/>
</dbReference>
<dbReference type="GO" id="GO:0044029">
    <property type="term" value="P:positive regulation of gene expression via chromosomal CpG island demethylation"/>
    <property type="evidence" value="ECO:0000316"/>
    <property type="project" value="ARUK-UCL"/>
</dbReference>
<dbReference type="GO" id="GO:0072303">
    <property type="term" value="P:positive regulation of glomerular metanephric mesangial cell proliferation"/>
    <property type="evidence" value="ECO:0000250"/>
    <property type="project" value="UniProtKB"/>
</dbReference>
<dbReference type="GO" id="GO:0046886">
    <property type="term" value="P:positive regulation of hormone biosynthetic process"/>
    <property type="evidence" value="ECO:0000315"/>
    <property type="project" value="UniProtKB"/>
</dbReference>
<dbReference type="GO" id="GO:0032731">
    <property type="term" value="P:positive regulation of interleukin-1 beta production"/>
    <property type="evidence" value="ECO:0000315"/>
    <property type="project" value="UniProtKB"/>
</dbReference>
<dbReference type="GO" id="GO:1902895">
    <property type="term" value="P:positive regulation of miRNA transcription"/>
    <property type="evidence" value="ECO:0007669"/>
    <property type="project" value="Ensembl"/>
</dbReference>
<dbReference type="GO" id="GO:1901875">
    <property type="term" value="P:positive regulation of post-translational protein modification"/>
    <property type="evidence" value="ECO:0007669"/>
    <property type="project" value="Ensembl"/>
</dbReference>
<dbReference type="GO" id="GO:0045944">
    <property type="term" value="P:positive regulation of transcription by RNA polymerase II"/>
    <property type="evidence" value="ECO:0000314"/>
    <property type="project" value="BHF-UCL"/>
</dbReference>
<dbReference type="GO" id="GO:0042981">
    <property type="term" value="P:regulation of apoptotic process"/>
    <property type="evidence" value="ECO:0000315"/>
    <property type="project" value="MGI"/>
</dbReference>
<dbReference type="GO" id="GO:0006355">
    <property type="term" value="P:regulation of DNA-templated transcription"/>
    <property type="evidence" value="ECO:0000315"/>
    <property type="project" value="MGI"/>
</dbReference>
<dbReference type="GO" id="GO:0043523">
    <property type="term" value="P:regulation of neuron apoptotic process"/>
    <property type="evidence" value="ECO:0007669"/>
    <property type="project" value="Ensembl"/>
</dbReference>
<dbReference type="GO" id="GO:2000182">
    <property type="term" value="P:regulation of progesterone biosynthetic process"/>
    <property type="evidence" value="ECO:0000315"/>
    <property type="project" value="UniProtKB"/>
</dbReference>
<dbReference type="GO" id="GO:0033233">
    <property type="term" value="P:regulation of protein sumoylation"/>
    <property type="evidence" value="ECO:0007669"/>
    <property type="project" value="Ensembl"/>
</dbReference>
<dbReference type="GO" id="GO:0006357">
    <property type="term" value="P:regulation of transcription by RNA polymerase II"/>
    <property type="evidence" value="ECO:0000314"/>
    <property type="project" value="MGI"/>
</dbReference>
<dbReference type="GO" id="GO:0009749">
    <property type="term" value="P:response to glucose"/>
    <property type="evidence" value="ECO:0000314"/>
    <property type="project" value="UniProtKB"/>
</dbReference>
<dbReference type="GO" id="GO:0001666">
    <property type="term" value="P:response to hypoxia"/>
    <property type="evidence" value="ECO:0000315"/>
    <property type="project" value="UniProtKB"/>
</dbReference>
<dbReference type="GO" id="GO:0032868">
    <property type="term" value="P:response to insulin"/>
    <property type="evidence" value="ECO:0000314"/>
    <property type="project" value="UniProtKB"/>
</dbReference>
<dbReference type="GO" id="GO:0002931">
    <property type="term" value="P:response to ischemia"/>
    <property type="evidence" value="ECO:0000315"/>
    <property type="project" value="UniProtKB"/>
</dbReference>
<dbReference type="GO" id="GO:0035914">
    <property type="term" value="P:skeletal muscle cell differentiation"/>
    <property type="evidence" value="ECO:0000315"/>
    <property type="project" value="MGI"/>
</dbReference>
<dbReference type="GO" id="GO:0030217">
    <property type="term" value="P:T cell differentiation"/>
    <property type="evidence" value="ECO:0000315"/>
    <property type="project" value="MGI"/>
</dbReference>
<dbReference type="FunFam" id="3.30.160.60:FF:000769">
    <property type="entry name" value="Early growth response 2b"/>
    <property type="match status" value="1"/>
</dbReference>
<dbReference type="FunFam" id="3.30.160.60:FF:000324">
    <property type="entry name" value="Early growth response protein 4"/>
    <property type="match status" value="1"/>
</dbReference>
<dbReference type="FunFam" id="3.30.160.60:FF:000419">
    <property type="entry name" value="Early growth response protein 4"/>
    <property type="match status" value="1"/>
</dbReference>
<dbReference type="Gene3D" id="3.30.160.60">
    <property type="entry name" value="Classic Zinc Finger"/>
    <property type="match status" value="3"/>
</dbReference>
<dbReference type="InterPro" id="IPR021839">
    <property type="entry name" value="EGR1_C"/>
</dbReference>
<dbReference type="InterPro" id="IPR021849">
    <property type="entry name" value="EGR_N"/>
</dbReference>
<dbReference type="InterPro" id="IPR036236">
    <property type="entry name" value="Znf_C2H2_sf"/>
</dbReference>
<dbReference type="InterPro" id="IPR013087">
    <property type="entry name" value="Znf_C2H2_type"/>
</dbReference>
<dbReference type="PANTHER" id="PTHR23235:SF42">
    <property type="entry name" value="EARLY GROWTH RESPONSE PROTEIN 1"/>
    <property type="match status" value="1"/>
</dbReference>
<dbReference type="PANTHER" id="PTHR23235">
    <property type="entry name" value="KRUEPPEL-LIKE TRANSCRIPTION FACTOR"/>
    <property type="match status" value="1"/>
</dbReference>
<dbReference type="Pfam" id="PF11914">
    <property type="entry name" value="DUF3432"/>
    <property type="match status" value="1"/>
</dbReference>
<dbReference type="Pfam" id="PF11928">
    <property type="entry name" value="DUF3446"/>
    <property type="match status" value="1"/>
</dbReference>
<dbReference type="Pfam" id="PF00096">
    <property type="entry name" value="zf-C2H2"/>
    <property type="match status" value="3"/>
</dbReference>
<dbReference type="SMART" id="SM00355">
    <property type="entry name" value="ZnF_C2H2"/>
    <property type="match status" value="3"/>
</dbReference>
<dbReference type="SUPFAM" id="SSF57667">
    <property type="entry name" value="beta-beta-alpha zinc fingers"/>
    <property type="match status" value="2"/>
</dbReference>
<dbReference type="PROSITE" id="PS00028">
    <property type="entry name" value="ZINC_FINGER_C2H2_1"/>
    <property type="match status" value="3"/>
</dbReference>
<dbReference type="PROSITE" id="PS50157">
    <property type="entry name" value="ZINC_FINGER_C2H2_2"/>
    <property type="match status" value="3"/>
</dbReference>
<name>EGR1_MOUSE</name>
<evidence type="ECO:0000250" key="1">
    <source>
        <dbReference type="UniProtKB" id="P18146"/>
    </source>
</evidence>
<evidence type="ECO:0000255" key="2">
    <source>
        <dbReference type="PROSITE-ProRule" id="PRU00042"/>
    </source>
</evidence>
<evidence type="ECO:0000256" key="3">
    <source>
        <dbReference type="SAM" id="MobiDB-lite"/>
    </source>
</evidence>
<evidence type="ECO:0000269" key="4">
    <source>
    </source>
</evidence>
<evidence type="ECO:0000269" key="5">
    <source>
    </source>
</evidence>
<evidence type="ECO:0000269" key="6">
    <source>
    </source>
</evidence>
<evidence type="ECO:0000269" key="7">
    <source>
    </source>
</evidence>
<evidence type="ECO:0000269" key="8">
    <source>
    </source>
</evidence>
<evidence type="ECO:0000269" key="9">
    <source>
    </source>
</evidence>
<evidence type="ECO:0000269" key="10">
    <source>
    </source>
</evidence>
<evidence type="ECO:0000269" key="11">
    <source>
    </source>
</evidence>
<evidence type="ECO:0000269" key="12">
    <source>
    </source>
</evidence>
<evidence type="ECO:0000269" key="13">
    <source>
    </source>
</evidence>
<evidence type="ECO:0000269" key="14">
    <source>
    </source>
</evidence>
<evidence type="ECO:0000303" key="15">
    <source>
    </source>
</evidence>
<evidence type="ECO:0000303" key="16">
    <source>
    </source>
</evidence>
<evidence type="ECO:0000303" key="17">
    <source>
    </source>
</evidence>
<evidence type="ECO:0000305" key="18"/>
<evidence type="ECO:0007744" key="19">
    <source>
        <dbReference type="PDB" id="1AAY"/>
    </source>
</evidence>
<evidence type="ECO:0007744" key="20">
    <source>
        <dbReference type="PDB" id="1ZAA"/>
    </source>
</evidence>
<evidence type="ECO:0007829" key="21">
    <source>
        <dbReference type="PDB" id="1A1H"/>
    </source>
</evidence>
<evidence type="ECO:0007829" key="22">
    <source>
        <dbReference type="PDB" id="1LLM"/>
    </source>
</evidence>
<evidence type="ECO:0007829" key="23">
    <source>
        <dbReference type="PDB" id="1P47"/>
    </source>
</evidence>
<gene>
    <name type="primary">Egr1</name>
    <name type="synonym">Egr-1</name>
    <name evidence="17" type="synonym">Krox-24</name>
</gene>
<keyword id="KW-0002">3D-structure</keyword>
<keyword id="KW-0010">Activator</keyword>
<keyword id="KW-0090">Biological rhythms</keyword>
<keyword id="KW-0963">Cytoplasm</keyword>
<keyword id="KW-0238">DNA-binding</keyword>
<keyword id="KW-1017">Isopeptide bond</keyword>
<keyword id="KW-0479">Metal-binding</keyword>
<keyword id="KW-0539">Nucleus</keyword>
<keyword id="KW-1185">Reference proteome</keyword>
<keyword id="KW-0677">Repeat</keyword>
<keyword id="KW-0804">Transcription</keyword>
<keyword id="KW-0805">Transcription regulation</keyword>
<keyword id="KW-0832">Ubl conjugation</keyword>
<keyword id="KW-0862">Zinc</keyword>
<keyword id="KW-0863">Zinc-finger</keyword>
<sequence>MAAAKAEMQLMSPLQISDPFGSFPHSPTMDNYPKLEEMMLLSNGAPQFLGAAGTPEGSGGNSSSSTSSGGGGGGGSNSGSSAFNPQGEPSEQPYEHLTTESFSDIALNNEKAMVETSYPSQTTRLPPITYTGRFSLEPAPNSGNTLWPEPLFSLVSGLVSMTNPPTSSSSAPSPAASSSSSASQSPPLSCAVPSNDSSPIYSAAPTFPTPNTDIFPEPQSQAFPGSAGTALQYPPPAYPATKGGFQVPMIPDYLFPQQQGDLSLGTPDQKPFQGLENRTQQPSLTPLSTIKAFATQSGSQDLKALNTTYQSQLIKPSRMRKYPNRPSKTPPHERPYACPVESCDRRFSRSDELTRHIRIHTGQKPFQCRICMRNFSRSDHLTTHIRTHTGEKPFACDICGRKFARSDERKRHTKIHLRQKDKKADKSVVASPAASSLSSYPSPVATSYPSPATTSFPSPVPTSYSSPGSSTYPSPAHSGFPSPSVATTFASVPPAFPTQVSSFPSAGVSSSFSTSTGLSDMTATFSPRTIEIC</sequence>
<accession>P08046</accession>
<accession>Q61777</accession>
<organism>
    <name type="scientific">Mus musculus</name>
    <name type="common">Mouse</name>
    <dbReference type="NCBI Taxonomy" id="10090"/>
    <lineage>
        <taxon>Eukaryota</taxon>
        <taxon>Metazoa</taxon>
        <taxon>Chordata</taxon>
        <taxon>Craniata</taxon>
        <taxon>Vertebrata</taxon>
        <taxon>Euteleostomi</taxon>
        <taxon>Mammalia</taxon>
        <taxon>Eutheria</taxon>
        <taxon>Euarchontoglires</taxon>
        <taxon>Glires</taxon>
        <taxon>Rodentia</taxon>
        <taxon>Myomorpha</taxon>
        <taxon>Muroidea</taxon>
        <taxon>Muridae</taxon>
        <taxon>Murinae</taxon>
        <taxon>Mus</taxon>
        <taxon>Mus</taxon>
    </lineage>
</organism>